<protein>
    <recommendedName>
        <fullName evidence="1">UDP-N-acetylglucosamine 1-carboxyvinyltransferase</fullName>
        <ecNumber evidence="1">2.5.1.7</ecNumber>
    </recommendedName>
    <alternativeName>
        <fullName evidence="1">Enoylpyruvate transferase</fullName>
    </alternativeName>
    <alternativeName>
        <fullName evidence="1">UDP-N-acetylglucosamine enolpyruvyl transferase</fullName>
        <shortName evidence="1">EPT</shortName>
    </alternativeName>
</protein>
<organism>
    <name type="scientific">Chlorobium limicola (strain DSM 245 / NBRC 103803 / 6330)</name>
    <dbReference type="NCBI Taxonomy" id="290315"/>
    <lineage>
        <taxon>Bacteria</taxon>
        <taxon>Pseudomonadati</taxon>
        <taxon>Chlorobiota</taxon>
        <taxon>Chlorobiia</taxon>
        <taxon>Chlorobiales</taxon>
        <taxon>Chlorobiaceae</taxon>
        <taxon>Chlorobium/Pelodictyon group</taxon>
        <taxon>Chlorobium</taxon>
    </lineage>
</organism>
<gene>
    <name evidence="1" type="primary">murA</name>
    <name type="ordered locus">Clim_0521</name>
</gene>
<feature type="chain" id="PRO_1000094678" description="UDP-N-acetylglucosamine 1-carboxyvinyltransferase">
    <location>
        <begin position="1"/>
        <end position="424"/>
    </location>
</feature>
<feature type="active site" description="Proton donor" evidence="1">
    <location>
        <position position="117"/>
    </location>
</feature>
<feature type="binding site" evidence="1">
    <location>
        <begin position="22"/>
        <end position="23"/>
    </location>
    <ligand>
        <name>phosphoenolpyruvate</name>
        <dbReference type="ChEBI" id="CHEBI:58702"/>
    </ligand>
</feature>
<feature type="binding site" evidence="1">
    <location>
        <position position="93"/>
    </location>
    <ligand>
        <name>UDP-N-acetyl-alpha-D-glucosamine</name>
        <dbReference type="ChEBI" id="CHEBI:57705"/>
    </ligand>
</feature>
<feature type="binding site" evidence="1">
    <location>
        <begin position="122"/>
        <end position="126"/>
    </location>
    <ligand>
        <name>UDP-N-acetyl-alpha-D-glucosamine</name>
        <dbReference type="ChEBI" id="CHEBI:57705"/>
    </ligand>
</feature>
<feature type="binding site" evidence="1">
    <location>
        <position position="307"/>
    </location>
    <ligand>
        <name>UDP-N-acetyl-alpha-D-glucosamine</name>
        <dbReference type="ChEBI" id="CHEBI:57705"/>
    </ligand>
</feature>
<feature type="binding site" evidence="1">
    <location>
        <position position="329"/>
    </location>
    <ligand>
        <name>UDP-N-acetyl-alpha-D-glucosamine</name>
        <dbReference type="ChEBI" id="CHEBI:57705"/>
    </ligand>
</feature>
<feature type="modified residue" description="2-(S-cysteinyl)pyruvic acid O-phosphothioketal" evidence="1">
    <location>
        <position position="117"/>
    </location>
</feature>
<evidence type="ECO:0000255" key="1">
    <source>
        <dbReference type="HAMAP-Rule" id="MF_00111"/>
    </source>
</evidence>
<reference key="1">
    <citation type="submission" date="2008-05" db="EMBL/GenBank/DDBJ databases">
        <title>Complete sequence of Chlorobium limicola DSM 245.</title>
        <authorList>
            <consortium name="US DOE Joint Genome Institute"/>
            <person name="Lucas S."/>
            <person name="Copeland A."/>
            <person name="Lapidus A."/>
            <person name="Glavina del Rio T."/>
            <person name="Dalin E."/>
            <person name="Tice H."/>
            <person name="Bruce D."/>
            <person name="Goodwin L."/>
            <person name="Pitluck S."/>
            <person name="Schmutz J."/>
            <person name="Larimer F."/>
            <person name="Land M."/>
            <person name="Hauser L."/>
            <person name="Kyrpides N."/>
            <person name="Ovchinnikova G."/>
            <person name="Zhao F."/>
            <person name="Li T."/>
            <person name="Liu Z."/>
            <person name="Overmann J."/>
            <person name="Bryant D.A."/>
            <person name="Richardson P."/>
        </authorList>
    </citation>
    <scope>NUCLEOTIDE SEQUENCE [LARGE SCALE GENOMIC DNA]</scope>
    <source>
        <strain>DSM 245 / NBRC 103803 / 6330</strain>
    </source>
</reference>
<keyword id="KW-0131">Cell cycle</keyword>
<keyword id="KW-0132">Cell division</keyword>
<keyword id="KW-0133">Cell shape</keyword>
<keyword id="KW-0961">Cell wall biogenesis/degradation</keyword>
<keyword id="KW-0963">Cytoplasm</keyword>
<keyword id="KW-0573">Peptidoglycan synthesis</keyword>
<keyword id="KW-0670">Pyruvate</keyword>
<keyword id="KW-0808">Transferase</keyword>
<name>MURA_CHLL2</name>
<accession>B3EGH6</accession>
<proteinExistence type="inferred from homology"/>
<sequence>MDKLVIRGGRRLIGSVTASGSKNSSLPVIAATLLSGNGTFTLHRIPDLQDISTFTQLINHLGAQTSFSDNTLTVSTGNVESLLAPYELVKKMRASIYVLGPLLARFGEATVSLPGGCAFGPRPIDLHLMAMEKLGAEITIETGFITAKARNGKLQGARIDFPVSSVGATGNALMAAVLAEGKTIITNAAAEPEIEALCRFLASMGARIEGTGTTELIIEGVTSLSAVEFTNVFDRIEAGTLLAAAAITGGTVTVDGVEPEQLKSVLKKFAHAGCTISQTPGSITLASPEKLIPTDITAKPYPSFPTDMQAQWTALMTQAEGTSRITDKVYHERFNHIPELNRLGAHIEIRKNQAIVEGPRRLSGTKVMSTDLRASACLVLAGLVADGVTEVLRVYHLDRGYEQIEMKLNSLGADITREKYKEFS</sequence>
<comment type="function">
    <text evidence="1">Cell wall formation. Adds enolpyruvyl to UDP-N-acetylglucosamine.</text>
</comment>
<comment type="catalytic activity">
    <reaction evidence="1">
        <text>phosphoenolpyruvate + UDP-N-acetyl-alpha-D-glucosamine = UDP-N-acetyl-3-O-(1-carboxyvinyl)-alpha-D-glucosamine + phosphate</text>
        <dbReference type="Rhea" id="RHEA:18681"/>
        <dbReference type="ChEBI" id="CHEBI:43474"/>
        <dbReference type="ChEBI" id="CHEBI:57705"/>
        <dbReference type="ChEBI" id="CHEBI:58702"/>
        <dbReference type="ChEBI" id="CHEBI:68483"/>
        <dbReference type="EC" id="2.5.1.7"/>
    </reaction>
</comment>
<comment type="pathway">
    <text evidence="1">Cell wall biogenesis; peptidoglycan biosynthesis.</text>
</comment>
<comment type="subcellular location">
    <subcellularLocation>
        <location evidence="1">Cytoplasm</location>
    </subcellularLocation>
</comment>
<comment type="similarity">
    <text evidence="1">Belongs to the EPSP synthase family. MurA subfamily.</text>
</comment>
<dbReference type="EC" id="2.5.1.7" evidence="1"/>
<dbReference type="EMBL" id="CP001097">
    <property type="protein sequence ID" value="ACD89613.1"/>
    <property type="molecule type" value="Genomic_DNA"/>
</dbReference>
<dbReference type="RefSeq" id="WP_012465494.1">
    <property type="nucleotide sequence ID" value="NC_010803.1"/>
</dbReference>
<dbReference type="SMR" id="B3EGH6"/>
<dbReference type="STRING" id="290315.Clim_0521"/>
<dbReference type="KEGG" id="cli:Clim_0521"/>
<dbReference type="eggNOG" id="COG0766">
    <property type="taxonomic scope" value="Bacteria"/>
</dbReference>
<dbReference type="HOGENOM" id="CLU_027387_0_0_10"/>
<dbReference type="OrthoDB" id="9803760at2"/>
<dbReference type="UniPathway" id="UPA00219"/>
<dbReference type="Proteomes" id="UP000008841">
    <property type="component" value="Chromosome"/>
</dbReference>
<dbReference type="GO" id="GO:0005737">
    <property type="term" value="C:cytoplasm"/>
    <property type="evidence" value="ECO:0007669"/>
    <property type="project" value="UniProtKB-SubCell"/>
</dbReference>
<dbReference type="GO" id="GO:0008760">
    <property type="term" value="F:UDP-N-acetylglucosamine 1-carboxyvinyltransferase activity"/>
    <property type="evidence" value="ECO:0007669"/>
    <property type="project" value="UniProtKB-UniRule"/>
</dbReference>
<dbReference type="GO" id="GO:0051301">
    <property type="term" value="P:cell division"/>
    <property type="evidence" value="ECO:0007669"/>
    <property type="project" value="UniProtKB-KW"/>
</dbReference>
<dbReference type="GO" id="GO:0071555">
    <property type="term" value="P:cell wall organization"/>
    <property type="evidence" value="ECO:0007669"/>
    <property type="project" value="UniProtKB-KW"/>
</dbReference>
<dbReference type="GO" id="GO:0009252">
    <property type="term" value="P:peptidoglycan biosynthetic process"/>
    <property type="evidence" value="ECO:0007669"/>
    <property type="project" value="UniProtKB-UniRule"/>
</dbReference>
<dbReference type="GO" id="GO:0008360">
    <property type="term" value="P:regulation of cell shape"/>
    <property type="evidence" value="ECO:0007669"/>
    <property type="project" value="UniProtKB-KW"/>
</dbReference>
<dbReference type="GO" id="GO:0019277">
    <property type="term" value="P:UDP-N-acetylgalactosamine biosynthetic process"/>
    <property type="evidence" value="ECO:0007669"/>
    <property type="project" value="InterPro"/>
</dbReference>
<dbReference type="CDD" id="cd01555">
    <property type="entry name" value="UdpNAET"/>
    <property type="match status" value="1"/>
</dbReference>
<dbReference type="FunFam" id="3.65.10.10:FF:000001">
    <property type="entry name" value="UDP-N-acetylglucosamine 1-carboxyvinyltransferase"/>
    <property type="match status" value="1"/>
</dbReference>
<dbReference type="Gene3D" id="3.65.10.10">
    <property type="entry name" value="Enolpyruvate transferase domain"/>
    <property type="match status" value="2"/>
</dbReference>
<dbReference type="HAMAP" id="MF_00111">
    <property type="entry name" value="MurA"/>
    <property type="match status" value="1"/>
</dbReference>
<dbReference type="InterPro" id="IPR001986">
    <property type="entry name" value="Enolpyruvate_Tfrase_dom"/>
</dbReference>
<dbReference type="InterPro" id="IPR036968">
    <property type="entry name" value="Enolpyruvate_Tfrase_sf"/>
</dbReference>
<dbReference type="InterPro" id="IPR050068">
    <property type="entry name" value="MurA_subfamily"/>
</dbReference>
<dbReference type="InterPro" id="IPR013792">
    <property type="entry name" value="RNA3'P_cycl/enolpyr_Trfase_a/b"/>
</dbReference>
<dbReference type="InterPro" id="IPR005750">
    <property type="entry name" value="UDP_GlcNAc_COvinyl_MurA"/>
</dbReference>
<dbReference type="NCBIfam" id="TIGR01072">
    <property type="entry name" value="murA"/>
    <property type="match status" value="1"/>
</dbReference>
<dbReference type="NCBIfam" id="NF006873">
    <property type="entry name" value="PRK09369.1"/>
    <property type="match status" value="1"/>
</dbReference>
<dbReference type="PANTHER" id="PTHR43783">
    <property type="entry name" value="UDP-N-ACETYLGLUCOSAMINE 1-CARBOXYVINYLTRANSFERASE"/>
    <property type="match status" value="1"/>
</dbReference>
<dbReference type="PANTHER" id="PTHR43783:SF1">
    <property type="entry name" value="UDP-N-ACETYLGLUCOSAMINE 1-CARBOXYVINYLTRANSFERASE"/>
    <property type="match status" value="1"/>
</dbReference>
<dbReference type="Pfam" id="PF00275">
    <property type="entry name" value="EPSP_synthase"/>
    <property type="match status" value="1"/>
</dbReference>
<dbReference type="SUPFAM" id="SSF55205">
    <property type="entry name" value="EPT/RTPC-like"/>
    <property type="match status" value="1"/>
</dbReference>